<accession>Q8XWS4</accession>
<dbReference type="EC" id="2.7.8.26" evidence="1"/>
<dbReference type="EMBL" id="AL646052">
    <property type="protein sequence ID" value="CAD16103.1"/>
    <property type="molecule type" value="Genomic_DNA"/>
</dbReference>
<dbReference type="RefSeq" id="WP_011002319.1">
    <property type="nucleotide sequence ID" value="NC_003295.1"/>
</dbReference>
<dbReference type="STRING" id="267608.RSc2396"/>
<dbReference type="EnsemblBacteria" id="CAD16103">
    <property type="protein sequence ID" value="CAD16103"/>
    <property type="gene ID" value="RSc2396"/>
</dbReference>
<dbReference type="KEGG" id="rso:RSc2396"/>
<dbReference type="PATRIC" id="fig|267608.8.peg.2436"/>
<dbReference type="eggNOG" id="COG0368">
    <property type="taxonomic scope" value="Bacteria"/>
</dbReference>
<dbReference type="HOGENOM" id="CLU_057426_1_1_4"/>
<dbReference type="UniPathway" id="UPA00148">
    <property type="reaction ID" value="UER00238"/>
</dbReference>
<dbReference type="Proteomes" id="UP000001436">
    <property type="component" value="Chromosome"/>
</dbReference>
<dbReference type="GO" id="GO:0005886">
    <property type="term" value="C:plasma membrane"/>
    <property type="evidence" value="ECO:0007669"/>
    <property type="project" value="UniProtKB-SubCell"/>
</dbReference>
<dbReference type="GO" id="GO:0051073">
    <property type="term" value="F:adenosylcobinamide-GDP ribazoletransferase activity"/>
    <property type="evidence" value="ECO:0007669"/>
    <property type="project" value="UniProtKB-UniRule"/>
</dbReference>
<dbReference type="GO" id="GO:0008818">
    <property type="term" value="F:cobalamin 5'-phosphate synthase activity"/>
    <property type="evidence" value="ECO:0007669"/>
    <property type="project" value="UniProtKB-UniRule"/>
</dbReference>
<dbReference type="GO" id="GO:0009236">
    <property type="term" value="P:cobalamin biosynthetic process"/>
    <property type="evidence" value="ECO:0007669"/>
    <property type="project" value="UniProtKB-UniRule"/>
</dbReference>
<dbReference type="HAMAP" id="MF_00719">
    <property type="entry name" value="CobS"/>
    <property type="match status" value="1"/>
</dbReference>
<dbReference type="InterPro" id="IPR003805">
    <property type="entry name" value="CobS"/>
</dbReference>
<dbReference type="NCBIfam" id="TIGR00317">
    <property type="entry name" value="cobS"/>
    <property type="match status" value="1"/>
</dbReference>
<dbReference type="NCBIfam" id="NF001277">
    <property type="entry name" value="PRK00235.1-3"/>
    <property type="match status" value="1"/>
</dbReference>
<dbReference type="PANTHER" id="PTHR34148">
    <property type="entry name" value="ADENOSYLCOBINAMIDE-GDP RIBAZOLETRANSFERASE"/>
    <property type="match status" value="1"/>
</dbReference>
<dbReference type="PANTHER" id="PTHR34148:SF1">
    <property type="entry name" value="ADENOSYLCOBINAMIDE-GDP RIBAZOLETRANSFERASE"/>
    <property type="match status" value="1"/>
</dbReference>
<dbReference type="Pfam" id="PF02654">
    <property type="entry name" value="CobS"/>
    <property type="match status" value="1"/>
</dbReference>
<organism>
    <name type="scientific">Ralstonia nicotianae (strain ATCC BAA-1114 / GMI1000)</name>
    <name type="common">Ralstonia solanacearum</name>
    <dbReference type="NCBI Taxonomy" id="267608"/>
    <lineage>
        <taxon>Bacteria</taxon>
        <taxon>Pseudomonadati</taxon>
        <taxon>Pseudomonadota</taxon>
        <taxon>Betaproteobacteria</taxon>
        <taxon>Burkholderiales</taxon>
        <taxon>Burkholderiaceae</taxon>
        <taxon>Ralstonia</taxon>
        <taxon>Ralstonia solanacearum species complex</taxon>
    </lineage>
</organism>
<sequence length="258" mass="27124">MMAALREACRSLWIAIGYFTRIPVPASVGFSQDGLNRAARFFPLVGWLVGAAGALAYWLASRTVPAPGVAVAASMAATLLLTGAFHEDGLADCADGFGGGYTAEDRLRIMRDSRIGAFGAIAVCMALLLKWQLLMAMAAQHAAAAMAAMVAAHAASRGMAVSYLLTHDYARMEGKAKPVAQPMGRRDAAWAALFGGLPLLGFGMACAAIAVAVLLAARWALGRYFTRRLGGITGDCLGLAQQVFELLVLWVLLAWTSS</sequence>
<evidence type="ECO:0000255" key="1">
    <source>
        <dbReference type="HAMAP-Rule" id="MF_00719"/>
    </source>
</evidence>
<gene>
    <name evidence="1" type="primary">cobS</name>
    <name type="ordered locus">RSc2396</name>
    <name type="ORF">RS02726</name>
</gene>
<protein>
    <recommendedName>
        <fullName evidence="1">Adenosylcobinamide-GDP ribazoletransferase</fullName>
        <ecNumber evidence="1">2.7.8.26</ecNumber>
    </recommendedName>
    <alternativeName>
        <fullName evidence="1">Cobalamin synthase</fullName>
    </alternativeName>
    <alternativeName>
        <fullName evidence="1">Cobalamin-5'-phosphate synthase</fullName>
    </alternativeName>
</protein>
<feature type="chain" id="PRO_0000146891" description="Adenosylcobinamide-GDP ribazoletransferase">
    <location>
        <begin position="1"/>
        <end position="258"/>
    </location>
</feature>
<feature type="transmembrane region" description="Helical" evidence="1">
    <location>
        <begin position="41"/>
        <end position="61"/>
    </location>
</feature>
<feature type="transmembrane region" description="Helical" evidence="1">
    <location>
        <begin position="65"/>
        <end position="85"/>
    </location>
</feature>
<feature type="transmembrane region" description="Helical" evidence="1">
    <location>
        <begin position="115"/>
        <end position="135"/>
    </location>
</feature>
<feature type="transmembrane region" description="Helical" evidence="1">
    <location>
        <begin position="136"/>
        <end position="156"/>
    </location>
</feature>
<feature type="transmembrane region" description="Helical" evidence="1">
    <location>
        <begin position="197"/>
        <end position="217"/>
    </location>
</feature>
<feature type="transmembrane region" description="Helical" evidence="1">
    <location>
        <begin position="236"/>
        <end position="256"/>
    </location>
</feature>
<name>COBS_RALN1</name>
<reference key="1">
    <citation type="journal article" date="2002" name="Nature">
        <title>Genome sequence of the plant pathogen Ralstonia solanacearum.</title>
        <authorList>
            <person name="Salanoubat M."/>
            <person name="Genin S."/>
            <person name="Artiguenave F."/>
            <person name="Gouzy J."/>
            <person name="Mangenot S."/>
            <person name="Arlat M."/>
            <person name="Billault A."/>
            <person name="Brottier P."/>
            <person name="Camus J.-C."/>
            <person name="Cattolico L."/>
            <person name="Chandler M."/>
            <person name="Choisne N."/>
            <person name="Claudel-Renard C."/>
            <person name="Cunnac S."/>
            <person name="Demange N."/>
            <person name="Gaspin C."/>
            <person name="Lavie M."/>
            <person name="Moisan A."/>
            <person name="Robert C."/>
            <person name="Saurin W."/>
            <person name="Schiex T."/>
            <person name="Siguier P."/>
            <person name="Thebault P."/>
            <person name="Whalen M."/>
            <person name="Wincker P."/>
            <person name="Levy M."/>
            <person name="Weissenbach J."/>
            <person name="Boucher C.A."/>
        </authorList>
    </citation>
    <scope>NUCLEOTIDE SEQUENCE [LARGE SCALE GENOMIC DNA]</scope>
    <source>
        <strain>ATCC BAA-1114 / GMI1000</strain>
    </source>
</reference>
<proteinExistence type="inferred from homology"/>
<keyword id="KW-0997">Cell inner membrane</keyword>
<keyword id="KW-1003">Cell membrane</keyword>
<keyword id="KW-0169">Cobalamin biosynthesis</keyword>
<keyword id="KW-0460">Magnesium</keyword>
<keyword id="KW-0472">Membrane</keyword>
<keyword id="KW-1185">Reference proteome</keyword>
<keyword id="KW-0808">Transferase</keyword>
<keyword id="KW-0812">Transmembrane</keyword>
<keyword id="KW-1133">Transmembrane helix</keyword>
<comment type="function">
    <text evidence="1">Joins adenosylcobinamide-GDP and alpha-ribazole to generate adenosylcobalamin (Ado-cobalamin). Also synthesizes adenosylcobalamin 5'-phosphate from adenosylcobinamide-GDP and alpha-ribazole 5'-phosphate.</text>
</comment>
<comment type="catalytic activity">
    <reaction evidence="1">
        <text>alpha-ribazole + adenosylcob(III)inamide-GDP = adenosylcob(III)alamin + GMP + H(+)</text>
        <dbReference type="Rhea" id="RHEA:16049"/>
        <dbReference type="ChEBI" id="CHEBI:10329"/>
        <dbReference type="ChEBI" id="CHEBI:15378"/>
        <dbReference type="ChEBI" id="CHEBI:18408"/>
        <dbReference type="ChEBI" id="CHEBI:58115"/>
        <dbReference type="ChEBI" id="CHEBI:60487"/>
        <dbReference type="EC" id="2.7.8.26"/>
    </reaction>
</comment>
<comment type="catalytic activity">
    <reaction evidence="1">
        <text>alpha-ribazole 5'-phosphate + adenosylcob(III)inamide-GDP = adenosylcob(III)alamin 5'-phosphate + GMP + H(+)</text>
        <dbReference type="Rhea" id="RHEA:23560"/>
        <dbReference type="ChEBI" id="CHEBI:15378"/>
        <dbReference type="ChEBI" id="CHEBI:57918"/>
        <dbReference type="ChEBI" id="CHEBI:58115"/>
        <dbReference type="ChEBI" id="CHEBI:60487"/>
        <dbReference type="ChEBI" id="CHEBI:60493"/>
        <dbReference type="EC" id="2.7.8.26"/>
    </reaction>
</comment>
<comment type="cofactor">
    <cofactor evidence="1">
        <name>Mg(2+)</name>
        <dbReference type="ChEBI" id="CHEBI:18420"/>
    </cofactor>
</comment>
<comment type="pathway">
    <text evidence="1">Cofactor biosynthesis; adenosylcobalamin biosynthesis; adenosylcobalamin from cob(II)yrinate a,c-diamide: step 7/7.</text>
</comment>
<comment type="subcellular location">
    <subcellularLocation>
        <location evidence="1">Cell inner membrane</location>
        <topology evidence="1">Multi-pass membrane protein</topology>
    </subcellularLocation>
</comment>
<comment type="similarity">
    <text evidence="1">Belongs to the CobS family.</text>
</comment>